<keyword id="KW-0963">Cytoplasm</keyword>
<keyword id="KW-0378">Hydrolase</keyword>
<keyword id="KW-0391">Immunity</keyword>
<keyword id="KW-0399">Innate immunity</keyword>
<keyword id="KW-0645">Protease</keyword>
<keyword id="KW-1185">Reference proteome</keyword>
<keyword id="KW-0788">Thiol protease</keyword>
<keyword id="KW-0833">Ubl conjugation pathway</keyword>
<sequence length="922" mass="104156">MISLKVCGFIQIWSQKTGMTKLKEALIETVQRQKEIKLVVTFKSGKFIRIFQLSNNIRSVVLRHCKKRQSHLRLTLKNNVFLFIDKLSYRDAKQLNMFLDIIHQNKSQQPMKSDDDWSVFESRNMLKEIDKTSFYSICNKPSYQKMPLFMSKSPTHVKKGILENQGGKGQNTLSSDVQTNEDILKEDNPVPNKKYKTDSLKYIQSNRKNPSSLEDLEKDRDLKLGPSFNTNCNGNPNLDETVLATQTLNAKNGLTSPLEPEHSQGDPRCNKAQVPLDSHSQQLQQGFPNLGNTCYMNAVLQSLFAIPSFADDLLTQGVPWEYIPFEALIMTLTQLLALKDFCSTKIKRELLGNVKKVISAVAEIFSGNMQNDAHEFLGQCLDQLKEDMEKLNATLNTGKECGDENSSPQMHVGSAATKVFVCPVVANFEFELQLSLICKACGHAVLKVEPNNYLSINLHQETKPLPLSIQNSLDLFFKEEELEYNCQMCKQKSCVARHTFSRLSRVLIIHLKRYSFNNAWLLVKNNEQVYIPKSLSLSSYCNESTKPPLPLSSSAPVGKCEVLEVSQEMISEINSPLTPSMKLTSESSDSLVLPVEPDKNADLQRFQRDCGDASQEQHQRDLENGSALESELVHFRDRAIGEKELPVADSLMDQGDISLPVMYEDGGKLISSPDTRLVEVHLQEVPQHPELQKYEKTNTFVEFNFDSVTESTNGFYDCKENRIPEGSQGMAEQLQQCIEESIIDEFLQQAPPPGVRKLDAQEHTEETLNQSTELRLQKADLNHLGALGSDNPGNKNILDAENTRGEAKELTRNVKMGDPLQAYRLISVVSHIGSSPNSGHYISDVYDFQKQAWFTYNDLCVSEISETKMQEARLHSGYIFFYMHNGIFEELLRKAENSRLPSTQAGVIPQGEYEGDSLYRPA</sequence>
<evidence type="ECO:0000250" key="1">
    <source>
        <dbReference type="UniProtKB" id="Q9ES63"/>
    </source>
</evidence>
<evidence type="ECO:0000255" key="2">
    <source>
        <dbReference type="PROSITE-ProRule" id="PRU10092"/>
    </source>
</evidence>
<evidence type="ECO:0000255" key="3">
    <source>
        <dbReference type="PROSITE-ProRule" id="PRU10093"/>
    </source>
</evidence>
<evidence type="ECO:0000256" key="4">
    <source>
        <dbReference type="SAM" id="MobiDB-lite"/>
    </source>
</evidence>
<evidence type="ECO:0000269" key="5">
    <source>
    </source>
</evidence>
<evidence type="ECO:0000303" key="6">
    <source>
    </source>
</evidence>
<evidence type="ECO:0000305" key="7"/>
<evidence type="ECO:0000312" key="8">
    <source>
        <dbReference type="HGNC" id="HGNC:18563"/>
    </source>
</evidence>
<name>UBP29_HUMAN</name>
<organism>
    <name type="scientific">Homo sapiens</name>
    <name type="common">Human</name>
    <dbReference type="NCBI Taxonomy" id="9606"/>
    <lineage>
        <taxon>Eukaryota</taxon>
        <taxon>Metazoa</taxon>
        <taxon>Chordata</taxon>
        <taxon>Craniata</taxon>
        <taxon>Vertebrata</taxon>
        <taxon>Euteleostomi</taxon>
        <taxon>Mammalia</taxon>
        <taxon>Eutheria</taxon>
        <taxon>Euarchontoglires</taxon>
        <taxon>Primates</taxon>
        <taxon>Haplorrhini</taxon>
        <taxon>Catarrhini</taxon>
        <taxon>Hominidae</taxon>
        <taxon>Homo</taxon>
    </lineage>
</organism>
<proteinExistence type="evidence at protein level"/>
<reference key="1">
    <citation type="journal article" date="2000" name="Genome Res.">
        <title>Discovery of a novel, paternally expressed ubiquitin-specific processing protease gene through comparative analysis of an imprinted region of mouse chromosome 7 and human chromosome 19q13.4.</title>
        <authorList>
            <person name="Kim J."/>
            <person name="Noskov V.N."/>
            <person name="Lu X."/>
            <person name="Bergmann A."/>
            <person name="Ren X."/>
            <person name="Warth T."/>
            <person name="Richardson P."/>
            <person name="Kouprina N."/>
            <person name="Stubbs L."/>
        </authorList>
    </citation>
    <scope>NUCLEOTIDE SEQUENCE [MRNA]</scope>
</reference>
<reference key="2">
    <citation type="journal article" date="2020" name="Cell Res.">
        <title>USP29 maintains the stability of cGAS and promotes cellular antiviral responses and autoimmunity.</title>
        <authorList>
            <person name="Zhang Q."/>
            <person name="Tang Z."/>
            <person name="An R."/>
            <person name="Ye L."/>
            <person name="Zhong B."/>
        </authorList>
    </citation>
    <scope>FUNCTION</scope>
</reference>
<dbReference type="EC" id="3.4.19.12" evidence="1"/>
<dbReference type="EMBL" id="AF229438">
    <property type="protein sequence ID" value="AAG10401.1"/>
    <property type="molecule type" value="mRNA"/>
</dbReference>
<dbReference type="CCDS" id="CCDS33124.1"/>
<dbReference type="RefSeq" id="NP_001376572.1">
    <property type="nucleotide sequence ID" value="NM_001389643.1"/>
</dbReference>
<dbReference type="RefSeq" id="NP_065954.1">
    <property type="nucleotide sequence ID" value="NM_020903.3"/>
</dbReference>
<dbReference type="SMR" id="Q9HBJ7"/>
<dbReference type="BioGRID" id="121696">
    <property type="interactions" value="28"/>
</dbReference>
<dbReference type="FunCoup" id="Q9HBJ7">
    <property type="interactions" value="7"/>
</dbReference>
<dbReference type="IntAct" id="Q9HBJ7">
    <property type="interactions" value="9"/>
</dbReference>
<dbReference type="MINT" id="Q9HBJ7"/>
<dbReference type="STRING" id="9606.ENSP00000254181"/>
<dbReference type="MEROPS" id="C19.040"/>
<dbReference type="GlyGen" id="Q9HBJ7">
    <property type="glycosylation" value="1 site, 1 O-linked glycan (1 site)"/>
</dbReference>
<dbReference type="iPTMnet" id="Q9HBJ7"/>
<dbReference type="PhosphoSitePlus" id="Q9HBJ7"/>
<dbReference type="BioMuta" id="USP29"/>
<dbReference type="DMDM" id="23396891"/>
<dbReference type="jPOST" id="Q9HBJ7"/>
<dbReference type="MassIVE" id="Q9HBJ7"/>
<dbReference type="PaxDb" id="9606-ENSP00000254181"/>
<dbReference type="PeptideAtlas" id="Q9HBJ7"/>
<dbReference type="ProteomicsDB" id="81564"/>
<dbReference type="Antibodypedia" id="19631">
    <property type="antibodies" value="138 antibodies from 25 providers"/>
</dbReference>
<dbReference type="DNASU" id="57663"/>
<dbReference type="Ensembl" id="ENST00000254181.9">
    <property type="protein sequence ID" value="ENSP00000254181.3"/>
    <property type="gene ID" value="ENSG00000131864.11"/>
</dbReference>
<dbReference type="Ensembl" id="ENST00000598197.1">
    <property type="protein sequence ID" value="ENSP00000470747.1"/>
    <property type="gene ID" value="ENSG00000131864.11"/>
</dbReference>
<dbReference type="GeneID" id="57663"/>
<dbReference type="KEGG" id="hsa:57663"/>
<dbReference type="MANE-Select" id="ENST00000254181.9">
    <property type="protein sequence ID" value="ENSP00000254181.3"/>
    <property type="RefSeq nucleotide sequence ID" value="NM_020903.3"/>
    <property type="RefSeq protein sequence ID" value="NP_065954.1"/>
</dbReference>
<dbReference type="UCSC" id="uc002qny.4">
    <property type="organism name" value="human"/>
</dbReference>
<dbReference type="AGR" id="HGNC:18563"/>
<dbReference type="CTD" id="57663"/>
<dbReference type="DisGeNET" id="57663"/>
<dbReference type="GeneCards" id="USP29"/>
<dbReference type="HGNC" id="HGNC:18563">
    <property type="gene designation" value="USP29"/>
</dbReference>
<dbReference type="HPA" id="ENSG00000131864">
    <property type="expression patterns" value="Tissue enhanced (bone marrow, testis)"/>
</dbReference>
<dbReference type="MIM" id="609546">
    <property type="type" value="gene"/>
</dbReference>
<dbReference type="neXtProt" id="NX_Q9HBJ7"/>
<dbReference type="OpenTargets" id="ENSG00000131864"/>
<dbReference type="PharmGKB" id="PA38349"/>
<dbReference type="VEuPathDB" id="HostDB:ENSG00000131864"/>
<dbReference type="eggNOG" id="KOG1868">
    <property type="taxonomic scope" value="Eukaryota"/>
</dbReference>
<dbReference type="GeneTree" id="ENSGT00940000161929"/>
<dbReference type="HOGENOM" id="CLU_012557_0_0_1"/>
<dbReference type="InParanoid" id="Q9HBJ7"/>
<dbReference type="OMA" id="YIPKYLS"/>
<dbReference type="OrthoDB" id="289038at2759"/>
<dbReference type="PAN-GO" id="Q9HBJ7">
    <property type="GO annotations" value="6 GO annotations based on evolutionary models"/>
</dbReference>
<dbReference type="PhylomeDB" id="Q9HBJ7"/>
<dbReference type="TreeFam" id="TF323032"/>
<dbReference type="PathwayCommons" id="Q9HBJ7"/>
<dbReference type="SignaLink" id="Q9HBJ7"/>
<dbReference type="BioGRID-ORCS" id="57663">
    <property type="hits" value="8 hits in 1186 CRISPR screens"/>
</dbReference>
<dbReference type="GenomeRNAi" id="57663"/>
<dbReference type="Pharos" id="Q9HBJ7">
    <property type="development level" value="Tbio"/>
</dbReference>
<dbReference type="PRO" id="PR:Q9HBJ7"/>
<dbReference type="Proteomes" id="UP000005640">
    <property type="component" value="Chromosome 19"/>
</dbReference>
<dbReference type="RNAct" id="Q9HBJ7">
    <property type="molecule type" value="protein"/>
</dbReference>
<dbReference type="Bgee" id="ENSG00000131864">
    <property type="expression patterns" value="Expressed in male germ line stem cell (sensu Vertebrata) in testis and 72 other cell types or tissues"/>
</dbReference>
<dbReference type="ExpressionAtlas" id="Q9HBJ7">
    <property type="expression patterns" value="baseline and differential"/>
</dbReference>
<dbReference type="GO" id="GO:0005829">
    <property type="term" value="C:cytosol"/>
    <property type="evidence" value="ECO:0000318"/>
    <property type="project" value="GO_Central"/>
</dbReference>
<dbReference type="GO" id="GO:0005634">
    <property type="term" value="C:nucleus"/>
    <property type="evidence" value="ECO:0000318"/>
    <property type="project" value="GO_Central"/>
</dbReference>
<dbReference type="GO" id="GO:0048471">
    <property type="term" value="C:perinuclear region of cytoplasm"/>
    <property type="evidence" value="ECO:0007669"/>
    <property type="project" value="UniProtKB-SubCell"/>
</dbReference>
<dbReference type="GO" id="GO:0004843">
    <property type="term" value="F:cysteine-type deubiquitinase activity"/>
    <property type="evidence" value="ECO:0000318"/>
    <property type="project" value="GO_Central"/>
</dbReference>
<dbReference type="GO" id="GO:0004197">
    <property type="term" value="F:cysteine-type endopeptidase activity"/>
    <property type="evidence" value="ECO:0000250"/>
    <property type="project" value="UniProtKB"/>
</dbReference>
<dbReference type="GO" id="GO:0051607">
    <property type="term" value="P:defense response to virus"/>
    <property type="evidence" value="ECO:0000250"/>
    <property type="project" value="UniProtKB"/>
</dbReference>
<dbReference type="GO" id="GO:0000082">
    <property type="term" value="P:G1/S transition of mitotic cell cycle"/>
    <property type="evidence" value="ECO:0000318"/>
    <property type="project" value="GO_Central"/>
</dbReference>
<dbReference type="GO" id="GO:0045087">
    <property type="term" value="P:innate immune response"/>
    <property type="evidence" value="ECO:0007669"/>
    <property type="project" value="UniProtKB-KW"/>
</dbReference>
<dbReference type="GO" id="GO:0060340">
    <property type="term" value="P:positive regulation of type I interferon-mediated signaling pathway"/>
    <property type="evidence" value="ECO:0000250"/>
    <property type="project" value="UniProtKB"/>
</dbReference>
<dbReference type="GO" id="GO:0071108">
    <property type="term" value="P:protein K48-linked deubiquitination"/>
    <property type="evidence" value="ECO:0000250"/>
    <property type="project" value="UniProtKB"/>
</dbReference>
<dbReference type="GO" id="GO:0050821">
    <property type="term" value="P:protein stabilization"/>
    <property type="evidence" value="ECO:0000250"/>
    <property type="project" value="UniProtKB"/>
</dbReference>
<dbReference type="GO" id="GO:0006508">
    <property type="term" value="P:proteolysis"/>
    <property type="evidence" value="ECO:0007669"/>
    <property type="project" value="UniProtKB-KW"/>
</dbReference>
<dbReference type="GO" id="GO:0031647">
    <property type="term" value="P:regulation of protein stability"/>
    <property type="evidence" value="ECO:0000318"/>
    <property type="project" value="GO_Central"/>
</dbReference>
<dbReference type="CDD" id="cd02257">
    <property type="entry name" value="Peptidase_C19"/>
    <property type="match status" value="2"/>
</dbReference>
<dbReference type="CDD" id="cd13312">
    <property type="entry name" value="PH_USP37_like"/>
    <property type="match status" value="1"/>
</dbReference>
<dbReference type="FunFam" id="3.90.70.10:FF:000124">
    <property type="entry name" value="ubiquitin carboxyl-terminal hydrolase 26"/>
    <property type="match status" value="1"/>
</dbReference>
<dbReference type="FunFam" id="2.30.29.180:FF:000001">
    <property type="entry name" value="Ubiquitin carboxyl-terminal hydrolase 37"/>
    <property type="match status" value="1"/>
</dbReference>
<dbReference type="FunFam" id="3.90.70.10:FF:000066">
    <property type="entry name" value="Ubiquitin carboxyl-terminal hydrolase 37"/>
    <property type="match status" value="1"/>
</dbReference>
<dbReference type="Gene3D" id="3.90.70.10">
    <property type="entry name" value="Cysteine proteinases"/>
    <property type="match status" value="2"/>
</dbReference>
<dbReference type="Gene3D" id="2.30.29.180">
    <property type="entry name" value="Ubiquitin carboxyl-terminal hydrolase 26/29/37, pleckstrin homology-like domain"/>
    <property type="match status" value="1"/>
</dbReference>
<dbReference type="InterPro" id="IPR038765">
    <property type="entry name" value="Papain-like_cys_pep_sf"/>
</dbReference>
<dbReference type="InterPro" id="IPR050164">
    <property type="entry name" value="Peptidase_C19"/>
</dbReference>
<dbReference type="InterPro" id="IPR001394">
    <property type="entry name" value="Peptidase_C19_UCH"/>
</dbReference>
<dbReference type="InterPro" id="IPR032069">
    <property type="entry name" value="USP37-like_PH"/>
</dbReference>
<dbReference type="InterPro" id="IPR038093">
    <property type="entry name" value="USP37-like_PH_sf"/>
</dbReference>
<dbReference type="InterPro" id="IPR018200">
    <property type="entry name" value="USP_CS"/>
</dbReference>
<dbReference type="InterPro" id="IPR028889">
    <property type="entry name" value="USP_dom"/>
</dbReference>
<dbReference type="PANTHER" id="PTHR24006">
    <property type="entry name" value="UBIQUITIN CARBOXYL-TERMINAL HYDROLASE"/>
    <property type="match status" value="1"/>
</dbReference>
<dbReference type="PANTHER" id="PTHR24006:SF711">
    <property type="entry name" value="UBIQUITIN CARBOXYL-TERMINAL HYDROLASE 29"/>
    <property type="match status" value="1"/>
</dbReference>
<dbReference type="Pfam" id="PF00443">
    <property type="entry name" value="UCH"/>
    <property type="match status" value="1"/>
</dbReference>
<dbReference type="Pfam" id="PF16674">
    <property type="entry name" value="UCH_N"/>
    <property type="match status" value="1"/>
</dbReference>
<dbReference type="SUPFAM" id="SSF54001">
    <property type="entry name" value="Cysteine proteinases"/>
    <property type="match status" value="1"/>
</dbReference>
<dbReference type="PROSITE" id="PS00972">
    <property type="entry name" value="USP_1"/>
    <property type="match status" value="1"/>
</dbReference>
<dbReference type="PROSITE" id="PS00973">
    <property type="entry name" value="USP_2"/>
    <property type="match status" value="1"/>
</dbReference>
<dbReference type="PROSITE" id="PS50235">
    <property type="entry name" value="USP_3"/>
    <property type="match status" value="1"/>
</dbReference>
<feature type="chain" id="PRO_0000080660" description="Ubiquitin carboxyl-terminal hydrolase 29">
    <location>
        <begin position="1"/>
        <end position="922"/>
    </location>
</feature>
<feature type="domain" description="USP">
    <location>
        <begin position="285"/>
        <end position="885"/>
    </location>
</feature>
<feature type="region of interest" description="Disordered" evidence="4">
    <location>
        <begin position="160"/>
        <end position="196"/>
    </location>
</feature>
<feature type="compositionally biased region" description="Polar residues" evidence="4">
    <location>
        <begin position="170"/>
        <end position="181"/>
    </location>
</feature>
<feature type="active site" description="Nucleophile" evidence="2 3">
    <location>
        <position position="294"/>
    </location>
</feature>
<feature type="active site" description="Proton acceptor" evidence="2 3">
    <location>
        <position position="840"/>
    </location>
</feature>
<feature type="sequence variant" id="VAR_024590" description="In dbSNP:rs1027392.">
    <original>N</original>
    <variation>S</variation>
    <location>
        <position position="368"/>
    </location>
</feature>
<feature type="sequence variant" id="VAR_022055" description="In dbSNP:rs3795003.">
    <original>E</original>
    <variation>K</variation>
    <location>
        <position position="586"/>
    </location>
</feature>
<comment type="function">
    <text evidence="5">Deubiquitinase involved in innate antiviral immunity by mediating 'Lys-48'-linked deubiquitination of CGAS, thereby promoting its stabilization.</text>
</comment>
<comment type="catalytic activity">
    <reaction evidence="1">
        <text>Thiol-dependent hydrolysis of ester, thioester, amide, peptide and isopeptide bonds formed by the C-terminal Gly of ubiquitin (a 76-residue protein attached to proteins as an intracellular targeting signal).</text>
        <dbReference type="EC" id="3.4.19.12"/>
    </reaction>
</comment>
<comment type="interaction">
    <interactant intactId="EBI-2513526">
        <id>Q9HBJ7</id>
    </interactant>
    <interactant intactId="EBI-624291">
        <id>Q96GD4</id>
        <label>AURKB</label>
    </interactant>
    <organismsDiffer>false</organismsDiffer>
    <experiments>3</experiments>
</comment>
<comment type="subcellular location">
    <subcellularLocation>
        <location evidence="1">Cytoplasm</location>
        <location evidence="1">Perinuclear region</location>
    </subcellularLocation>
    <text evidence="1">Localizes to perinuclear region in response to herpes simplex virus-1 (HSV-1) infection.</text>
</comment>
<comment type="similarity">
    <text evidence="7">Belongs to the peptidase C19 family.</text>
</comment>
<protein>
    <recommendedName>
        <fullName evidence="7">Ubiquitin carboxyl-terminal hydrolase 29</fullName>
        <ecNumber evidence="1">3.4.19.12</ecNumber>
    </recommendedName>
    <alternativeName>
        <fullName>Deubiquitinating enzyme 29</fullName>
    </alternativeName>
    <alternativeName>
        <fullName>Ubiquitin thioesterase 29</fullName>
    </alternativeName>
    <alternativeName>
        <fullName>Ubiquitin-specific-processing protease 29</fullName>
    </alternativeName>
</protein>
<accession>Q9HBJ7</accession>
<gene>
    <name evidence="6 8" type="primary">USP29</name>
</gene>